<keyword id="KW-0025">Alternative splicing</keyword>
<keyword id="KW-0963">Cytoplasm</keyword>
<keyword id="KW-0597">Phosphoprotein</keyword>
<keyword id="KW-1185">Reference proteome</keyword>
<keyword id="KW-0833">Ubl conjugation pathway</keyword>
<reference key="1">
    <citation type="submission" date="2001-07" db="EMBL/GenBank/DDBJ databases">
        <title>SOCS box proteins.</title>
        <authorList>
            <person name="Friedel E.J."/>
            <person name="Nicholson S.E."/>
            <person name="Nicola N.A."/>
            <person name="Kile B.T."/>
            <person name="Hilton D.J."/>
        </authorList>
    </citation>
    <scope>NUCLEOTIDE SEQUENCE [MRNA] (ISOFORM 1)</scope>
</reference>
<reference key="2">
    <citation type="journal article" date="2005" name="Science">
        <title>The transcriptional landscape of the mammalian genome.</title>
        <authorList>
            <person name="Carninci P."/>
            <person name="Kasukawa T."/>
            <person name="Katayama S."/>
            <person name="Gough J."/>
            <person name="Frith M.C."/>
            <person name="Maeda N."/>
            <person name="Oyama R."/>
            <person name="Ravasi T."/>
            <person name="Lenhard B."/>
            <person name="Wells C."/>
            <person name="Kodzius R."/>
            <person name="Shimokawa K."/>
            <person name="Bajic V.B."/>
            <person name="Brenner S.E."/>
            <person name="Batalov S."/>
            <person name="Forrest A.R."/>
            <person name="Zavolan M."/>
            <person name="Davis M.J."/>
            <person name="Wilming L.G."/>
            <person name="Aidinis V."/>
            <person name="Allen J.E."/>
            <person name="Ambesi-Impiombato A."/>
            <person name="Apweiler R."/>
            <person name="Aturaliya R.N."/>
            <person name="Bailey T.L."/>
            <person name="Bansal M."/>
            <person name="Baxter L."/>
            <person name="Beisel K.W."/>
            <person name="Bersano T."/>
            <person name="Bono H."/>
            <person name="Chalk A.M."/>
            <person name="Chiu K.P."/>
            <person name="Choudhary V."/>
            <person name="Christoffels A."/>
            <person name="Clutterbuck D.R."/>
            <person name="Crowe M.L."/>
            <person name="Dalla E."/>
            <person name="Dalrymple B.P."/>
            <person name="de Bono B."/>
            <person name="Della Gatta G."/>
            <person name="di Bernardo D."/>
            <person name="Down T."/>
            <person name="Engstrom P."/>
            <person name="Fagiolini M."/>
            <person name="Faulkner G."/>
            <person name="Fletcher C.F."/>
            <person name="Fukushima T."/>
            <person name="Furuno M."/>
            <person name="Futaki S."/>
            <person name="Gariboldi M."/>
            <person name="Georgii-Hemming P."/>
            <person name="Gingeras T.R."/>
            <person name="Gojobori T."/>
            <person name="Green R.E."/>
            <person name="Gustincich S."/>
            <person name="Harbers M."/>
            <person name="Hayashi Y."/>
            <person name="Hensch T.K."/>
            <person name="Hirokawa N."/>
            <person name="Hill D."/>
            <person name="Huminiecki L."/>
            <person name="Iacono M."/>
            <person name="Ikeo K."/>
            <person name="Iwama A."/>
            <person name="Ishikawa T."/>
            <person name="Jakt M."/>
            <person name="Kanapin A."/>
            <person name="Katoh M."/>
            <person name="Kawasawa Y."/>
            <person name="Kelso J."/>
            <person name="Kitamura H."/>
            <person name="Kitano H."/>
            <person name="Kollias G."/>
            <person name="Krishnan S.P."/>
            <person name="Kruger A."/>
            <person name="Kummerfeld S.K."/>
            <person name="Kurochkin I.V."/>
            <person name="Lareau L.F."/>
            <person name="Lazarevic D."/>
            <person name="Lipovich L."/>
            <person name="Liu J."/>
            <person name="Liuni S."/>
            <person name="McWilliam S."/>
            <person name="Madan Babu M."/>
            <person name="Madera M."/>
            <person name="Marchionni L."/>
            <person name="Matsuda H."/>
            <person name="Matsuzawa S."/>
            <person name="Miki H."/>
            <person name="Mignone F."/>
            <person name="Miyake S."/>
            <person name="Morris K."/>
            <person name="Mottagui-Tabar S."/>
            <person name="Mulder N."/>
            <person name="Nakano N."/>
            <person name="Nakauchi H."/>
            <person name="Ng P."/>
            <person name="Nilsson R."/>
            <person name="Nishiguchi S."/>
            <person name="Nishikawa S."/>
            <person name="Nori F."/>
            <person name="Ohara O."/>
            <person name="Okazaki Y."/>
            <person name="Orlando V."/>
            <person name="Pang K.C."/>
            <person name="Pavan W.J."/>
            <person name="Pavesi G."/>
            <person name="Pesole G."/>
            <person name="Petrovsky N."/>
            <person name="Piazza S."/>
            <person name="Reed J."/>
            <person name="Reid J.F."/>
            <person name="Ring B.Z."/>
            <person name="Ringwald M."/>
            <person name="Rost B."/>
            <person name="Ruan Y."/>
            <person name="Salzberg S.L."/>
            <person name="Sandelin A."/>
            <person name="Schneider C."/>
            <person name="Schoenbach C."/>
            <person name="Sekiguchi K."/>
            <person name="Semple C.A."/>
            <person name="Seno S."/>
            <person name="Sessa L."/>
            <person name="Sheng Y."/>
            <person name="Shibata Y."/>
            <person name="Shimada H."/>
            <person name="Shimada K."/>
            <person name="Silva D."/>
            <person name="Sinclair B."/>
            <person name="Sperling S."/>
            <person name="Stupka E."/>
            <person name="Sugiura K."/>
            <person name="Sultana R."/>
            <person name="Takenaka Y."/>
            <person name="Taki K."/>
            <person name="Tammoja K."/>
            <person name="Tan S.L."/>
            <person name="Tang S."/>
            <person name="Taylor M.S."/>
            <person name="Tegner J."/>
            <person name="Teichmann S.A."/>
            <person name="Ueda H.R."/>
            <person name="van Nimwegen E."/>
            <person name="Verardo R."/>
            <person name="Wei C.L."/>
            <person name="Yagi K."/>
            <person name="Yamanishi H."/>
            <person name="Zabarovsky E."/>
            <person name="Zhu S."/>
            <person name="Zimmer A."/>
            <person name="Hide W."/>
            <person name="Bult C."/>
            <person name="Grimmond S.M."/>
            <person name="Teasdale R.D."/>
            <person name="Liu E.T."/>
            <person name="Brusic V."/>
            <person name="Quackenbush J."/>
            <person name="Wahlestedt C."/>
            <person name="Mattick J.S."/>
            <person name="Hume D.A."/>
            <person name="Kai C."/>
            <person name="Sasaki D."/>
            <person name="Tomaru Y."/>
            <person name="Fukuda S."/>
            <person name="Kanamori-Katayama M."/>
            <person name="Suzuki M."/>
            <person name="Aoki J."/>
            <person name="Arakawa T."/>
            <person name="Iida J."/>
            <person name="Imamura K."/>
            <person name="Itoh M."/>
            <person name="Kato T."/>
            <person name="Kawaji H."/>
            <person name="Kawagashira N."/>
            <person name="Kawashima T."/>
            <person name="Kojima M."/>
            <person name="Kondo S."/>
            <person name="Konno H."/>
            <person name="Nakano K."/>
            <person name="Ninomiya N."/>
            <person name="Nishio T."/>
            <person name="Okada M."/>
            <person name="Plessy C."/>
            <person name="Shibata K."/>
            <person name="Shiraki T."/>
            <person name="Suzuki S."/>
            <person name="Tagami M."/>
            <person name="Waki K."/>
            <person name="Watahiki A."/>
            <person name="Okamura-Oho Y."/>
            <person name="Suzuki H."/>
            <person name="Kawai J."/>
            <person name="Hayashizaki Y."/>
        </authorList>
    </citation>
    <scope>NUCLEOTIDE SEQUENCE [LARGE SCALE MRNA] (ISOFORM 1)</scope>
    <source>
        <strain>C57BL/6J</strain>
        <strain>NOD</strain>
        <tissue>Aorta</tissue>
        <tissue>Embryo</tissue>
        <tissue>Pituitary anterior lobe</tissue>
        <tissue>Spleen</tissue>
        <tissue>Testis</tissue>
        <tissue>Vein</tissue>
    </source>
</reference>
<reference key="3">
    <citation type="journal article" date="2004" name="Genome Res.">
        <title>The status, quality, and expansion of the NIH full-length cDNA project: the Mammalian Gene Collection (MGC).</title>
        <authorList>
            <consortium name="The MGC Project Team"/>
        </authorList>
    </citation>
    <scope>NUCLEOTIDE SEQUENCE [LARGE SCALE MRNA] (ISOFORMS 1 AND 2)</scope>
    <source>
        <strain>C57BL/6J</strain>
        <tissue>Eye</tissue>
    </source>
</reference>
<reference key="4">
    <citation type="journal article" date="2006" name="Nat. Struct. Mol. Biol.">
        <title>The SPRY domain of SSB-2 adopts a novel fold that presents conserved Par-4-binding residues.</title>
        <authorList>
            <person name="Masters S.L."/>
            <person name="Yao S."/>
            <person name="Willson T.A."/>
            <person name="Zhang J.-G."/>
            <person name="Palmer K.R."/>
            <person name="Smith B.J."/>
            <person name="Babon J.J."/>
            <person name="Nicola N.A."/>
            <person name="Norton R.S."/>
            <person name="Nicholson S.E."/>
        </authorList>
    </citation>
    <scope>INTERACTION WITH PAWR AND MET</scope>
</reference>
<reference key="5">
    <citation type="journal article" date="2006" name="EMBO J.">
        <title>Structural and functional insights into the B30.2/SPRY domain.</title>
        <authorList>
            <person name="Woo J.S."/>
            <person name="Imm J.H."/>
            <person name="Min C.K."/>
            <person name="Kim K.J."/>
            <person name="Cha S.S."/>
            <person name="Oh B.H."/>
        </authorList>
    </citation>
    <scope>INTERACTION WITH ELONGIN BC COMPLEX</scope>
</reference>
<reference key="6">
    <citation type="journal article" date="2010" name="J. Cell Biol.">
        <title>The SPRY domain-containing SOCS box protein SPSB2 targets iNOS for proteasomal degradation.</title>
        <authorList>
            <person name="Kuang Z."/>
            <person name="Lewis R.S."/>
            <person name="Curtis J.M."/>
            <person name="Zhan Y."/>
            <person name="Saunders B.M."/>
            <person name="Babon J.J."/>
            <person name="Kolesnik T.B."/>
            <person name="Low A."/>
            <person name="Masters S.L."/>
            <person name="Willson T.A."/>
            <person name="Kedzierski L."/>
            <person name="Yao S."/>
            <person name="Handman E."/>
            <person name="Norton R.S."/>
            <person name="Nicholson S.E."/>
        </authorList>
    </citation>
    <scope>INTERACTION WITH NOS2</scope>
</reference>
<reference key="7">
    <citation type="journal article" date="2010" name="J. Mol. Biol.">
        <title>Structural basis for Par-4 recognition by the SPRY domain- and SOCS box-containing proteins SPSB1, SPSB2, and SPSB4.</title>
        <authorList>
            <person name="Filippakopoulos P."/>
            <person name="Low A."/>
            <person name="Sharpe T.D."/>
            <person name="Uppenberg J."/>
            <person name="Yao S."/>
            <person name="Kuang Z."/>
            <person name="Savitsky P."/>
            <person name="Lewis R.S."/>
            <person name="Nicholson S.E."/>
            <person name="Norton R.S."/>
            <person name="Bullock A.N."/>
        </authorList>
    </citation>
    <scope>INTERACTION WITH PAWR</scope>
    <scope>DOMAIN</scope>
</reference>
<protein>
    <recommendedName>
        <fullName>SPRY domain-containing SOCS box protein 1</fullName>
        <shortName>SSB-1</shortName>
    </recommendedName>
</protein>
<sequence>MGQKVTGGIKTVDMRDPTYRPLKQELQGLDYCKPTRLDLLLDMPPVSYDVQLLHSWNNNDRSLNVFVKEDDKLIFHRHPVAQSTDAIRGKVGYTRGLHVWQITWAMRQRGTHAVVGVATADAPLHSVGYTTLVGNNHESWGWDLGRNRLYHDGKNQPSKTYPAFLEPDETFIVPDSFLVALDMDDGTLSFIVDGQYMGVAFRGLKGKKLYPVVSAVWGHCEIRMRYLNGLDPEPLPLMDLCRRSVRLALGKERLGAIPALPLPASLKAYLLYQ</sequence>
<proteinExistence type="evidence at protein level"/>
<gene>
    <name type="primary">Spsb1</name>
    <name type="synonym">Ssb1</name>
</gene>
<organism>
    <name type="scientific">Mus musculus</name>
    <name type="common">Mouse</name>
    <dbReference type="NCBI Taxonomy" id="10090"/>
    <lineage>
        <taxon>Eukaryota</taxon>
        <taxon>Metazoa</taxon>
        <taxon>Chordata</taxon>
        <taxon>Craniata</taxon>
        <taxon>Vertebrata</taxon>
        <taxon>Euteleostomi</taxon>
        <taxon>Mammalia</taxon>
        <taxon>Eutheria</taxon>
        <taxon>Euarchontoglires</taxon>
        <taxon>Glires</taxon>
        <taxon>Rodentia</taxon>
        <taxon>Myomorpha</taxon>
        <taxon>Muroidea</taxon>
        <taxon>Muridae</taxon>
        <taxon>Murinae</taxon>
        <taxon>Mus</taxon>
        <taxon>Mus</taxon>
    </lineage>
</organism>
<evidence type="ECO:0000250" key="1"/>
<evidence type="ECO:0000250" key="2">
    <source>
        <dbReference type="UniProtKB" id="Q96BD6"/>
    </source>
</evidence>
<evidence type="ECO:0000255" key="3">
    <source>
        <dbReference type="PROSITE-ProRule" id="PRU00194"/>
    </source>
</evidence>
<evidence type="ECO:0000255" key="4">
    <source>
        <dbReference type="PROSITE-ProRule" id="PRU00548"/>
    </source>
</evidence>
<evidence type="ECO:0000269" key="5">
    <source>
    </source>
</evidence>
<evidence type="ECO:0000269" key="6">
    <source>
    </source>
</evidence>
<evidence type="ECO:0000269" key="7">
    <source>
    </source>
</evidence>
<evidence type="ECO:0000269" key="8">
    <source>
    </source>
</evidence>
<evidence type="ECO:0000303" key="9">
    <source>
    </source>
</evidence>
<evidence type="ECO:0000305" key="10"/>
<dbReference type="EMBL" id="AF403036">
    <property type="protein sequence ID" value="AAL57355.1"/>
    <property type="molecule type" value="mRNA"/>
</dbReference>
<dbReference type="EMBL" id="AK015181">
    <property type="protein sequence ID" value="BAB29738.1"/>
    <property type="molecule type" value="mRNA"/>
</dbReference>
<dbReference type="EMBL" id="AK003707">
    <property type="protein sequence ID" value="BAC25049.1"/>
    <property type="molecule type" value="mRNA"/>
</dbReference>
<dbReference type="EMBL" id="AK030417">
    <property type="protein sequence ID" value="BAC26954.1"/>
    <property type="molecule type" value="mRNA"/>
</dbReference>
<dbReference type="EMBL" id="AK040909">
    <property type="protein sequence ID" value="BAC30739.1"/>
    <property type="molecule type" value="mRNA"/>
</dbReference>
<dbReference type="EMBL" id="AK089767">
    <property type="protein sequence ID" value="BAC40957.1"/>
    <property type="molecule type" value="mRNA"/>
</dbReference>
<dbReference type="EMBL" id="AK160081">
    <property type="protein sequence ID" value="BAE35613.1"/>
    <property type="molecule type" value="mRNA"/>
</dbReference>
<dbReference type="EMBL" id="AK172334">
    <property type="protein sequence ID" value="BAE42952.1"/>
    <property type="molecule type" value="mRNA"/>
</dbReference>
<dbReference type="EMBL" id="BC046787">
    <property type="protein sequence ID" value="AAH46787.1"/>
    <property type="molecule type" value="mRNA"/>
</dbReference>
<dbReference type="EMBL" id="BC057563">
    <property type="protein sequence ID" value="AAH57563.1"/>
    <property type="molecule type" value="mRNA"/>
</dbReference>
<dbReference type="EMBL" id="BC089357">
    <property type="protein sequence ID" value="AAH89357.1"/>
    <property type="molecule type" value="mRNA"/>
</dbReference>
<dbReference type="CCDS" id="CCDS18966.1">
    <molecule id="Q9D5L7-1"/>
</dbReference>
<dbReference type="RefSeq" id="NP_001406185.1">
    <molecule id="Q9D5L7-1"/>
    <property type="nucleotide sequence ID" value="NM_001419256.1"/>
</dbReference>
<dbReference type="RefSeq" id="NP_001406186.1">
    <molecule id="Q9D5L7-1"/>
    <property type="nucleotide sequence ID" value="NM_001419257.1"/>
</dbReference>
<dbReference type="RefSeq" id="NP_001406187.1">
    <molecule id="Q9D5L7-1"/>
    <property type="nucleotide sequence ID" value="NM_001419258.1"/>
</dbReference>
<dbReference type="RefSeq" id="NP_001406188.1">
    <molecule id="Q9D5L7-1"/>
    <property type="nucleotide sequence ID" value="NM_001419259.1"/>
</dbReference>
<dbReference type="RefSeq" id="NP_083311.1">
    <molecule id="Q9D5L7-1"/>
    <property type="nucleotide sequence ID" value="NM_029035.3"/>
</dbReference>
<dbReference type="RefSeq" id="XP_006539297.1">
    <molecule id="Q9D5L7-1"/>
    <property type="nucleotide sequence ID" value="XM_006539234.4"/>
</dbReference>
<dbReference type="RefSeq" id="XP_011248646.1">
    <property type="nucleotide sequence ID" value="XM_011250344.2"/>
</dbReference>
<dbReference type="RefSeq" id="XP_011248647.1">
    <property type="nucleotide sequence ID" value="XM_011250345.2"/>
</dbReference>
<dbReference type="SMR" id="Q9D5L7"/>
<dbReference type="DIP" id="DIP-29000N"/>
<dbReference type="FunCoup" id="Q9D5L7">
    <property type="interactions" value="199"/>
</dbReference>
<dbReference type="IntAct" id="Q9D5L7">
    <property type="interactions" value="1"/>
</dbReference>
<dbReference type="STRING" id="10090.ENSMUSP00000048969"/>
<dbReference type="iPTMnet" id="Q9D5L7"/>
<dbReference type="PhosphoSitePlus" id="Q9D5L7"/>
<dbReference type="PaxDb" id="10090-ENSMUSP00000048969"/>
<dbReference type="ProteomicsDB" id="254534">
    <molecule id="Q9D5L7-1"/>
</dbReference>
<dbReference type="ProteomicsDB" id="254535">
    <molecule id="Q9D5L7-2"/>
</dbReference>
<dbReference type="Antibodypedia" id="1144">
    <property type="antibodies" value="63 antibodies from 19 providers"/>
</dbReference>
<dbReference type="Ensembl" id="ENSMUST00000038562.9">
    <molecule id="Q9D5L7-1"/>
    <property type="protein sequence ID" value="ENSMUSP00000048969.3"/>
    <property type="gene ID" value="ENSMUSG00000039911.14"/>
</dbReference>
<dbReference type="Ensembl" id="ENSMUST00000105684.2">
    <molecule id="Q9D5L7-1"/>
    <property type="protein sequence ID" value="ENSMUSP00000101309.2"/>
    <property type="gene ID" value="ENSMUSG00000039911.14"/>
</dbReference>
<dbReference type="Ensembl" id="ENSMUST00000105685.2">
    <molecule id="Q9D5L7-1"/>
    <property type="protein sequence ID" value="ENSMUSP00000101310.2"/>
    <property type="gene ID" value="ENSMUSG00000039911.14"/>
</dbReference>
<dbReference type="GeneID" id="74646"/>
<dbReference type="KEGG" id="mmu:74646"/>
<dbReference type="UCSC" id="uc008vxf.1">
    <molecule id="Q9D5L7-1"/>
    <property type="organism name" value="mouse"/>
</dbReference>
<dbReference type="AGR" id="MGI:1921896"/>
<dbReference type="CTD" id="80176"/>
<dbReference type="MGI" id="MGI:1921896">
    <property type="gene designation" value="Spsb1"/>
</dbReference>
<dbReference type="VEuPathDB" id="HostDB:ENSMUSG00000039911"/>
<dbReference type="eggNOG" id="KOG3953">
    <property type="taxonomic scope" value="Eukaryota"/>
</dbReference>
<dbReference type="GeneTree" id="ENSGT01030000234629"/>
<dbReference type="HOGENOM" id="CLU_046756_0_1_1"/>
<dbReference type="InParanoid" id="Q9D5L7"/>
<dbReference type="OMA" id="SESYGWD"/>
<dbReference type="OrthoDB" id="5547302at2759"/>
<dbReference type="PhylomeDB" id="Q9D5L7"/>
<dbReference type="TreeFam" id="TF312822"/>
<dbReference type="Reactome" id="R-MMU-8951664">
    <property type="pathway name" value="Neddylation"/>
</dbReference>
<dbReference type="Reactome" id="R-MMU-983168">
    <property type="pathway name" value="Antigen processing: Ubiquitination &amp; Proteasome degradation"/>
</dbReference>
<dbReference type="UniPathway" id="UPA00143"/>
<dbReference type="BioGRID-ORCS" id="74646">
    <property type="hits" value="3 hits in 79 CRISPR screens"/>
</dbReference>
<dbReference type="ChiTaRS" id="Spsb1">
    <property type="organism name" value="mouse"/>
</dbReference>
<dbReference type="PRO" id="PR:Q9D5L7"/>
<dbReference type="Proteomes" id="UP000000589">
    <property type="component" value="Chromosome 4"/>
</dbReference>
<dbReference type="RNAct" id="Q9D5L7">
    <property type="molecule type" value="protein"/>
</dbReference>
<dbReference type="Bgee" id="ENSMUSG00000039911">
    <property type="expression patterns" value="Expressed in decidua and 219 other cell types or tissues"/>
</dbReference>
<dbReference type="ExpressionAtlas" id="Q9D5L7">
    <property type="expression patterns" value="baseline and differential"/>
</dbReference>
<dbReference type="GO" id="GO:0005829">
    <property type="term" value="C:cytosol"/>
    <property type="evidence" value="ECO:0000250"/>
    <property type="project" value="UniProtKB"/>
</dbReference>
<dbReference type="GO" id="GO:1990756">
    <property type="term" value="F:ubiquitin-like ligase-substrate adaptor activity"/>
    <property type="evidence" value="ECO:0000250"/>
    <property type="project" value="UniProtKB"/>
</dbReference>
<dbReference type="GO" id="GO:0016567">
    <property type="term" value="P:protein ubiquitination"/>
    <property type="evidence" value="ECO:0000250"/>
    <property type="project" value="UniProtKB"/>
</dbReference>
<dbReference type="GO" id="GO:0006511">
    <property type="term" value="P:ubiquitin-dependent protein catabolic process"/>
    <property type="evidence" value="ECO:0000250"/>
    <property type="project" value="UniProtKB"/>
</dbReference>
<dbReference type="CDD" id="cd12906">
    <property type="entry name" value="SPRY_SOCS1-2-4"/>
    <property type="match status" value="1"/>
</dbReference>
<dbReference type="FunFam" id="1.10.750.20:FF:000001">
    <property type="entry name" value="Ankyrin repeat and SOCS box containing 1"/>
    <property type="match status" value="1"/>
</dbReference>
<dbReference type="FunFam" id="2.60.120.920:FF:000007">
    <property type="entry name" value="SPRY domain-containing SOCS box protein 1"/>
    <property type="match status" value="1"/>
</dbReference>
<dbReference type="Gene3D" id="2.60.120.920">
    <property type="match status" value="1"/>
</dbReference>
<dbReference type="Gene3D" id="1.10.750.20">
    <property type="entry name" value="SOCS box"/>
    <property type="match status" value="1"/>
</dbReference>
<dbReference type="InterPro" id="IPR001870">
    <property type="entry name" value="B30.2/SPRY"/>
</dbReference>
<dbReference type="InterPro" id="IPR043136">
    <property type="entry name" value="B30.2/SPRY_sf"/>
</dbReference>
<dbReference type="InterPro" id="IPR013320">
    <property type="entry name" value="ConA-like_dom_sf"/>
</dbReference>
<dbReference type="InterPro" id="IPR050672">
    <property type="entry name" value="FBXO45-Fsn/SPSB_families"/>
</dbReference>
<dbReference type="InterPro" id="IPR001496">
    <property type="entry name" value="SOCS_box"/>
</dbReference>
<dbReference type="InterPro" id="IPR003877">
    <property type="entry name" value="SPRY_dom"/>
</dbReference>
<dbReference type="PANTHER" id="PTHR12245">
    <property type="entry name" value="SPRY DOMAIN CONTAINING SOCS BOX PROTEIN"/>
    <property type="match status" value="1"/>
</dbReference>
<dbReference type="PANTHER" id="PTHR12245:SF8">
    <property type="entry name" value="SPRY DOMAIN-CONTAINING SOCS BOX PROTEIN 1"/>
    <property type="match status" value="1"/>
</dbReference>
<dbReference type="Pfam" id="PF07525">
    <property type="entry name" value="SOCS_box"/>
    <property type="match status" value="1"/>
</dbReference>
<dbReference type="Pfam" id="PF00622">
    <property type="entry name" value="SPRY"/>
    <property type="match status" value="1"/>
</dbReference>
<dbReference type="SMART" id="SM00969">
    <property type="entry name" value="SOCS_box"/>
    <property type="match status" value="1"/>
</dbReference>
<dbReference type="SMART" id="SM00449">
    <property type="entry name" value="SPRY"/>
    <property type="match status" value="1"/>
</dbReference>
<dbReference type="SUPFAM" id="SSF49899">
    <property type="entry name" value="Concanavalin A-like lectins/glucanases"/>
    <property type="match status" value="1"/>
</dbReference>
<dbReference type="PROSITE" id="PS50188">
    <property type="entry name" value="B302_SPRY"/>
    <property type="match status" value="1"/>
</dbReference>
<dbReference type="PROSITE" id="PS50225">
    <property type="entry name" value="SOCS"/>
    <property type="match status" value="1"/>
</dbReference>
<feature type="chain" id="PRO_0000238473" description="SPRY domain-containing SOCS box protein 1">
    <location>
        <begin position="1"/>
        <end position="273"/>
    </location>
</feature>
<feature type="domain" description="B30.2/SPRY" evidence="4">
    <location>
        <begin position="33"/>
        <end position="231"/>
    </location>
</feature>
<feature type="domain" description="SOCS box" evidence="3">
    <location>
        <begin position="232"/>
        <end position="273"/>
    </location>
</feature>
<feature type="modified residue" description="Phosphotyrosine" evidence="2">
    <location>
        <position position="31"/>
    </location>
</feature>
<feature type="splice variant" id="VSP_018612" description="In isoform 2." evidence="9">
    <location>
        <begin position="1"/>
        <end position="105"/>
    </location>
</feature>
<feature type="sequence conflict" description="In Ref. 1; BAC40957." evidence="10" ref="1">
    <original>T</original>
    <variation>S</variation>
    <location>
        <position position="11"/>
    </location>
</feature>
<feature type="sequence conflict" description="In Ref. 1; BAC40957." evidence="10" ref="1">
    <original>H</original>
    <variation>R</variation>
    <location>
        <position position="125"/>
    </location>
</feature>
<feature type="sequence conflict" description="In Ref. 1; BAC40957." evidence="10" ref="1">
    <original>R</original>
    <variation>H</variation>
    <location>
        <position position="146"/>
    </location>
</feature>
<name>SPSB1_MOUSE</name>
<accession>Q9D5L7</accession>
<accession>Q5FWI0</accession>
<accession>Q8BJA4</accession>
<comment type="function">
    <text evidence="2">Substrate recognition component of a SCF-like ECS (Elongin BC-CUL2/5-SOCS-box protein) E3 ubiquitin-protein ligase complex which mediates the ubiquitination and subsequent proteasomal degradation of target proteins (By similarity). Negatively regulates nitric oxide (NO) production and limits cellular toxicity in activated macrophages by mediating the ubiquitination and proteasomal degradation of NOS2 (By similarity). Acts as a bridge which links the NOS2 with the ECS E3 ubiquitin ligase complex components ELOC and CUL5 (By similarity).</text>
</comment>
<comment type="pathway">
    <text>Protein modification; protein ubiquitination.</text>
</comment>
<comment type="subunit">
    <text evidence="2 5 6 7 8">Component of the probable ECS(SPSB1) E3 ubiquitin-protein ligase complex which contains CUL5, RNF7/RBX2, Elongin BC complex and SPSB1 (By similarity). Interacts with CUL5, RNF7, ELOB and ELOC (By similarity). Directly interacts with MET tyrosine kinase domain in the presence and in the absence of HGF, however HGF treatment has a positive effect on this interaction (PubMed:16369487). When phosphorylated, interacts with RASA1 without affecting its stability (By similarity). Interacts (via B30.2/SPRY domain) with PAWR; this interaction is direct and occurs in association with the Elongin BC complex (PubMed:16369487, PubMed:16498413, PubMed:20561531). Interacts with EPHB2 (By similarity). Interacts with NOS2 (PubMed:20603330).</text>
</comment>
<comment type="interaction">
    <interactant intactId="EBI-8821912">
        <id>Q9D5L7</id>
    </interactant>
    <interactant intactId="EBI-595869">
        <id>Q96IZ0</id>
        <label>PAWR</label>
    </interactant>
    <organismsDiffer>true</organismsDiffer>
    <experiments>2</experiments>
</comment>
<comment type="subcellular location">
    <subcellularLocation>
        <location evidence="10">Cytoplasm</location>
    </subcellularLocation>
    <subcellularLocation>
        <location evidence="2">Cytoplasm</location>
        <location evidence="2">Cytosol</location>
    </subcellularLocation>
    <text evidence="2">Exhibits a diffuse cytosolic localization.</text>
</comment>
<comment type="alternative products">
    <event type="alternative splicing"/>
    <isoform>
        <id>Q9D5L7-1</id>
        <name>1</name>
        <sequence type="displayed"/>
    </isoform>
    <isoform>
        <id>Q9D5L7-2</id>
        <name>2</name>
        <sequence type="described" ref="VSP_018612"/>
    </isoform>
</comment>
<comment type="domain">
    <text evidence="1 2">The SOCS box domain mediates the interaction with the Elongin BC complex, an adapter module in different E3 ubiquitin ligase complexes (By similarity). Essential for its ability to link NOS2 and the ECS E3 ubiquitin ligase complex components ELOC and CUL5 (By similarity).</text>
</comment>
<comment type="domain">
    <text evidence="5 7">The B30.2/SPRY domain is involved in MET and PAWR binding.</text>
</comment>
<comment type="similarity">
    <text evidence="10">Belongs to the SPSB family.</text>
</comment>